<gene>
    <name evidence="1" type="primary">hisH</name>
    <name type="ordered locus">RSc2948</name>
    <name type="ORF">RS00138</name>
</gene>
<keyword id="KW-0028">Amino-acid biosynthesis</keyword>
<keyword id="KW-0963">Cytoplasm</keyword>
<keyword id="KW-0315">Glutamine amidotransferase</keyword>
<keyword id="KW-0368">Histidine biosynthesis</keyword>
<keyword id="KW-0378">Hydrolase</keyword>
<keyword id="KW-0456">Lyase</keyword>
<keyword id="KW-1185">Reference proteome</keyword>
<reference key="1">
    <citation type="journal article" date="2002" name="Nature">
        <title>Genome sequence of the plant pathogen Ralstonia solanacearum.</title>
        <authorList>
            <person name="Salanoubat M."/>
            <person name="Genin S."/>
            <person name="Artiguenave F."/>
            <person name="Gouzy J."/>
            <person name="Mangenot S."/>
            <person name="Arlat M."/>
            <person name="Billault A."/>
            <person name="Brottier P."/>
            <person name="Camus J.-C."/>
            <person name="Cattolico L."/>
            <person name="Chandler M."/>
            <person name="Choisne N."/>
            <person name="Claudel-Renard C."/>
            <person name="Cunnac S."/>
            <person name="Demange N."/>
            <person name="Gaspin C."/>
            <person name="Lavie M."/>
            <person name="Moisan A."/>
            <person name="Robert C."/>
            <person name="Saurin W."/>
            <person name="Schiex T."/>
            <person name="Siguier P."/>
            <person name="Thebault P."/>
            <person name="Whalen M."/>
            <person name="Wincker P."/>
            <person name="Levy M."/>
            <person name="Weissenbach J."/>
            <person name="Boucher C.A."/>
        </authorList>
    </citation>
    <scope>NUCLEOTIDE SEQUENCE [LARGE SCALE GENOMIC DNA]</scope>
    <source>
        <strain>ATCC BAA-1114 / GMI1000</strain>
    </source>
</reference>
<name>HIS5_RALN1</name>
<proteinExistence type="inferred from homology"/>
<dbReference type="EC" id="4.3.2.10" evidence="1"/>
<dbReference type="EC" id="3.5.1.2" evidence="1"/>
<dbReference type="EMBL" id="AL646052">
    <property type="protein sequence ID" value="CAD16655.1"/>
    <property type="molecule type" value="Genomic_DNA"/>
</dbReference>
<dbReference type="RefSeq" id="WP_011002853.1">
    <property type="nucleotide sequence ID" value="NC_003295.1"/>
</dbReference>
<dbReference type="SMR" id="Q8XV83"/>
<dbReference type="STRING" id="267608.RSc2948"/>
<dbReference type="EnsemblBacteria" id="CAD16655">
    <property type="protein sequence ID" value="CAD16655"/>
    <property type="gene ID" value="RSc2948"/>
</dbReference>
<dbReference type="KEGG" id="rso:RSc2948"/>
<dbReference type="PATRIC" id="fig|267608.8.peg.3004"/>
<dbReference type="eggNOG" id="COG0118">
    <property type="taxonomic scope" value="Bacteria"/>
</dbReference>
<dbReference type="HOGENOM" id="CLU_071837_2_0_4"/>
<dbReference type="UniPathway" id="UPA00031">
    <property type="reaction ID" value="UER00010"/>
</dbReference>
<dbReference type="Proteomes" id="UP000001436">
    <property type="component" value="Chromosome"/>
</dbReference>
<dbReference type="GO" id="GO:0005737">
    <property type="term" value="C:cytoplasm"/>
    <property type="evidence" value="ECO:0007669"/>
    <property type="project" value="UniProtKB-SubCell"/>
</dbReference>
<dbReference type="GO" id="GO:0004359">
    <property type="term" value="F:glutaminase activity"/>
    <property type="evidence" value="ECO:0007669"/>
    <property type="project" value="UniProtKB-EC"/>
</dbReference>
<dbReference type="GO" id="GO:0000107">
    <property type="term" value="F:imidazoleglycerol-phosphate synthase activity"/>
    <property type="evidence" value="ECO:0007669"/>
    <property type="project" value="UniProtKB-UniRule"/>
</dbReference>
<dbReference type="GO" id="GO:0016829">
    <property type="term" value="F:lyase activity"/>
    <property type="evidence" value="ECO:0007669"/>
    <property type="project" value="UniProtKB-KW"/>
</dbReference>
<dbReference type="GO" id="GO:0000105">
    <property type="term" value="P:L-histidine biosynthetic process"/>
    <property type="evidence" value="ECO:0007669"/>
    <property type="project" value="UniProtKB-UniRule"/>
</dbReference>
<dbReference type="CDD" id="cd01748">
    <property type="entry name" value="GATase1_IGP_Synthase"/>
    <property type="match status" value="1"/>
</dbReference>
<dbReference type="Gene3D" id="3.40.50.880">
    <property type="match status" value="1"/>
</dbReference>
<dbReference type="HAMAP" id="MF_00278">
    <property type="entry name" value="HisH"/>
    <property type="match status" value="1"/>
</dbReference>
<dbReference type="InterPro" id="IPR029062">
    <property type="entry name" value="Class_I_gatase-like"/>
</dbReference>
<dbReference type="InterPro" id="IPR017926">
    <property type="entry name" value="GATASE"/>
</dbReference>
<dbReference type="InterPro" id="IPR010139">
    <property type="entry name" value="Imidazole-glycPsynth_HisH"/>
</dbReference>
<dbReference type="NCBIfam" id="TIGR01855">
    <property type="entry name" value="IMP_synth_hisH"/>
    <property type="match status" value="1"/>
</dbReference>
<dbReference type="PANTHER" id="PTHR42701">
    <property type="entry name" value="IMIDAZOLE GLYCEROL PHOSPHATE SYNTHASE SUBUNIT HISH"/>
    <property type="match status" value="1"/>
</dbReference>
<dbReference type="PANTHER" id="PTHR42701:SF2">
    <property type="entry name" value="IMIDAZOLE GLYCEROL PHOSPHATE SYNTHASE SUBUNIT HISH 1"/>
    <property type="match status" value="1"/>
</dbReference>
<dbReference type="Pfam" id="PF00117">
    <property type="entry name" value="GATase"/>
    <property type="match status" value="1"/>
</dbReference>
<dbReference type="PIRSF" id="PIRSF000495">
    <property type="entry name" value="Amidotransf_hisH"/>
    <property type="match status" value="1"/>
</dbReference>
<dbReference type="SUPFAM" id="SSF52317">
    <property type="entry name" value="Class I glutamine amidotransferase-like"/>
    <property type="match status" value="1"/>
</dbReference>
<dbReference type="PROSITE" id="PS51273">
    <property type="entry name" value="GATASE_TYPE_1"/>
    <property type="match status" value="1"/>
</dbReference>
<feature type="chain" id="PRO_0000152412" description="Imidazole glycerol phosphate synthase subunit HisH">
    <location>
        <begin position="1"/>
        <end position="217"/>
    </location>
</feature>
<feature type="domain" description="Glutamine amidotransferase type-1" evidence="1">
    <location>
        <begin position="3"/>
        <end position="217"/>
    </location>
</feature>
<feature type="active site" description="Nucleophile" evidence="1">
    <location>
        <position position="82"/>
    </location>
</feature>
<feature type="active site" evidence="1">
    <location>
        <position position="197"/>
    </location>
</feature>
<feature type="active site" evidence="1">
    <location>
        <position position="199"/>
    </location>
</feature>
<sequence length="217" mass="23850">MTTIAIVDYGMGNLRSVAQALSTVAPDADVRISAQADEIRAADRVVLPGQGAMPDCMAAFDQSGLREAVLEAARTKPMLGVCVGEQMLLERSAEARAGEAFTAGLGLISGDVIRFDLDGRLQPDGSRYKVPQMGWNRVHQSRTHALWAGVPDQSYFYFVHSYYARPAHPDESVGETEYGVRFTCAIARDNIFATQFHPEKSAQAGLQIYRNFVHWKP</sequence>
<organism>
    <name type="scientific">Ralstonia nicotianae (strain ATCC BAA-1114 / GMI1000)</name>
    <name type="common">Ralstonia solanacearum</name>
    <dbReference type="NCBI Taxonomy" id="267608"/>
    <lineage>
        <taxon>Bacteria</taxon>
        <taxon>Pseudomonadati</taxon>
        <taxon>Pseudomonadota</taxon>
        <taxon>Betaproteobacteria</taxon>
        <taxon>Burkholderiales</taxon>
        <taxon>Burkholderiaceae</taxon>
        <taxon>Ralstonia</taxon>
        <taxon>Ralstonia solanacearum species complex</taxon>
    </lineage>
</organism>
<comment type="function">
    <text evidence="1">IGPS catalyzes the conversion of PRFAR and glutamine to IGP, AICAR and glutamate. The HisH subunit catalyzes the hydrolysis of glutamine to glutamate and ammonia as part of the synthesis of IGP and AICAR. The resulting ammonia molecule is channeled to the active site of HisF.</text>
</comment>
<comment type="catalytic activity">
    <reaction evidence="1">
        <text>5-[(5-phospho-1-deoxy-D-ribulos-1-ylimino)methylamino]-1-(5-phospho-beta-D-ribosyl)imidazole-4-carboxamide + L-glutamine = D-erythro-1-(imidazol-4-yl)glycerol 3-phosphate + 5-amino-1-(5-phospho-beta-D-ribosyl)imidazole-4-carboxamide + L-glutamate + H(+)</text>
        <dbReference type="Rhea" id="RHEA:24793"/>
        <dbReference type="ChEBI" id="CHEBI:15378"/>
        <dbReference type="ChEBI" id="CHEBI:29985"/>
        <dbReference type="ChEBI" id="CHEBI:58278"/>
        <dbReference type="ChEBI" id="CHEBI:58359"/>
        <dbReference type="ChEBI" id="CHEBI:58475"/>
        <dbReference type="ChEBI" id="CHEBI:58525"/>
        <dbReference type="EC" id="4.3.2.10"/>
    </reaction>
</comment>
<comment type="catalytic activity">
    <reaction evidence="1">
        <text>L-glutamine + H2O = L-glutamate + NH4(+)</text>
        <dbReference type="Rhea" id="RHEA:15889"/>
        <dbReference type="ChEBI" id="CHEBI:15377"/>
        <dbReference type="ChEBI" id="CHEBI:28938"/>
        <dbReference type="ChEBI" id="CHEBI:29985"/>
        <dbReference type="ChEBI" id="CHEBI:58359"/>
        <dbReference type="EC" id="3.5.1.2"/>
    </reaction>
</comment>
<comment type="pathway">
    <text evidence="1">Amino-acid biosynthesis; L-histidine biosynthesis; L-histidine from 5-phospho-alpha-D-ribose 1-diphosphate: step 5/9.</text>
</comment>
<comment type="subunit">
    <text evidence="1">Heterodimer of HisH and HisF.</text>
</comment>
<comment type="subcellular location">
    <subcellularLocation>
        <location evidence="1">Cytoplasm</location>
    </subcellularLocation>
</comment>
<evidence type="ECO:0000255" key="1">
    <source>
        <dbReference type="HAMAP-Rule" id="MF_00278"/>
    </source>
</evidence>
<protein>
    <recommendedName>
        <fullName evidence="1">Imidazole glycerol phosphate synthase subunit HisH</fullName>
        <ecNumber evidence="1">4.3.2.10</ecNumber>
    </recommendedName>
    <alternativeName>
        <fullName evidence="1">IGP synthase glutaminase subunit</fullName>
        <ecNumber evidence="1">3.5.1.2</ecNumber>
    </alternativeName>
    <alternativeName>
        <fullName evidence="1">IGP synthase subunit HisH</fullName>
    </alternativeName>
    <alternativeName>
        <fullName evidence="1">ImGP synthase subunit HisH</fullName>
        <shortName evidence="1">IGPS subunit HisH</shortName>
    </alternativeName>
</protein>
<accession>Q8XV83</accession>